<proteinExistence type="inferred from homology"/>
<protein>
    <recommendedName>
        <fullName evidence="1">Uncharacterized methyltransferase BcerKBAB4_4222</fullName>
        <ecNumber evidence="1">2.1.1.-</ecNumber>
    </recommendedName>
</protein>
<evidence type="ECO:0000255" key="1">
    <source>
        <dbReference type="HAMAP-Rule" id="MF_02100"/>
    </source>
</evidence>
<keyword id="KW-0489">Methyltransferase</keyword>
<keyword id="KW-0949">S-adenosyl-L-methionine</keyword>
<keyword id="KW-0808">Transferase</keyword>
<accession>A9VHZ6</accession>
<sequence length="212" mass="24248">MGTEFNGLFDEWAHTYDSFVQGEDIQYKEVFAHYEDILEDVVNKSFGNVLEFGVGTGNLTNKLLLAGRTVYGIEPSREMRTIAKEKLPKEFSITEGDFLSFEVPNSIDTIVSTYAFHHLTDDEKDVAIAKYSQLLNKGGKIVFADTIFADQDAYDKTVEAAKQRGFHQLANDLQTEYYTRIPIMQSIFENNGFHVTFTRLNHFVWVMEATKQ</sequence>
<feature type="chain" id="PRO_0000373851" description="Uncharacterized methyltransferase BcerKBAB4_4222">
    <location>
        <begin position="1"/>
        <end position="212"/>
    </location>
</feature>
<feature type="binding site" evidence="1">
    <location>
        <position position="53"/>
    </location>
    <ligand>
        <name>S-adenosyl-L-methionine</name>
        <dbReference type="ChEBI" id="CHEBI:59789"/>
    </ligand>
</feature>
<feature type="binding site" evidence="1">
    <location>
        <position position="74"/>
    </location>
    <ligand>
        <name>S-adenosyl-L-methionine</name>
        <dbReference type="ChEBI" id="CHEBI:59789"/>
    </ligand>
</feature>
<feature type="binding site" evidence="1">
    <location>
        <position position="97"/>
    </location>
    <ligand>
        <name>S-adenosyl-L-methionine</name>
        <dbReference type="ChEBI" id="CHEBI:59789"/>
    </ligand>
</feature>
<name>Y4222_BACMK</name>
<organism>
    <name type="scientific">Bacillus mycoides (strain KBAB4)</name>
    <name type="common">Bacillus weihenstephanensis</name>
    <dbReference type="NCBI Taxonomy" id="315730"/>
    <lineage>
        <taxon>Bacteria</taxon>
        <taxon>Bacillati</taxon>
        <taxon>Bacillota</taxon>
        <taxon>Bacilli</taxon>
        <taxon>Bacillales</taxon>
        <taxon>Bacillaceae</taxon>
        <taxon>Bacillus</taxon>
        <taxon>Bacillus cereus group</taxon>
    </lineage>
</organism>
<dbReference type="EC" id="2.1.1.-" evidence="1"/>
<dbReference type="EMBL" id="CP000903">
    <property type="protein sequence ID" value="ABY45381.1"/>
    <property type="molecule type" value="Genomic_DNA"/>
</dbReference>
<dbReference type="RefSeq" id="WP_012261738.1">
    <property type="nucleotide sequence ID" value="NC_010184.1"/>
</dbReference>
<dbReference type="SMR" id="A9VHZ6"/>
<dbReference type="KEGG" id="bwe:BcerKBAB4_4222"/>
<dbReference type="eggNOG" id="COG2226">
    <property type="taxonomic scope" value="Bacteria"/>
</dbReference>
<dbReference type="HOGENOM" id="CLU_111961_0_0_9"/>
<dbReference type="Proteomes" id="UP000002154">
    <property type="component" value="Chromosome"/>
</dbReference>
<dbReference type="GO" id="GO:0008757">
    <property type="term" value="F:S-adenosylmethionine-dependent methyltransferase activity"/>
    <property type="evidence" value="ECO:0007669"/>
    <property type="project" value="UniProtKB-UniRule"/>
</dbReference>
<dbReference type="GO" id="GO:0032259">
    <property type="term" value="P:methylation"/>
    <property type="evidence" value="ECO:0007669"/>
    <property type="project" value="UniProtKB-KW"/>
</dbReference>
<dbReference type="CDD" id="cd02440">
    <property type="entry name" value="AdoMet_MTases"/>
    <property type="match status" value="1"/>
</dbReference>
<dbReference type="Gene3D" id="3.40.50.150">
    <property type="entry name" value="Vaccinia Virus protein VP39"/>
    <property type="match status" value="1"/>
</dbReference>
<dbReference type="HAMAP" id="MF_02100">
    <property type="entry name" value="Methyltr_YrrT"/>
    <property type="match status" value="1"/>
</dbReference>
<dbReference type="InterPro" id="IPR041698">
    <property type="entry name" value="Methyltransf_25"/>
</dbReference>
<dbReference type="InterPro" id="IPR029063">
    <property type="entry name" value="SAM-dependent_MTases_sf"/>
</dbReference>
<dbReference type="InterPro" id="IPR023553">
    <property type="entry name" value="Uncharacterised_MeTfrase_YrrT"/>
</dbReference>
<dbReference type="PANTHER" id="PTHR43861:SF1">
    <property type="entry name" value="TRANS-ACONITATE 2-METHYLTRANSFERASE"/>
    <property type="match status" value="1"/>
</dbReference>
<dbReference type="PANTHER" id="PTHR43861">
    <property type="entry name" value="TRANS-ACONITATE 2-METHYLTRANSFERASE-RELATED"/>
    <property type="match status" value="1"/>
</dbReference>
<dbReference type="Pfam" id="PF13649">
    <property type="entry name" value="Methyltransf_25"/>
    <property type="match status" value="1"/>
</dbReference>
<dbReference type="SUPFAM" id="SSF53335">
    <property type="entry name" value="S-adenosyl-L-methionine-dependent methyltransferases"/>
    <property type="match status" value="1"/>
</dbReference>
<reference key="1">
    <citation type="journal article" date="2008" name="Chem. Biol. Interact.">
        <title>Extending the Bacillus cereus group genomics to putative food-borne pathogens of different toxicity.</title>
        <authorList>
            <person name="Lapidus A."/>
            <person name="Goltsman E."/>
            <person name="Auger S."/>
            <person name="Galleron N."/>
            <person name="Segurens B."/>
            <person name="Dossat C."/>
            <person name="Land M.L."/>
            <person name="Broussolle V."/>
            <person name="Brillard J."/>
            <person name="Guinebretiere M.-H."/>
            <person name="Sanchis V."/>
            <person name="Nguen-the C."/>
            <person name="Lereclus D."/>
            <person name="Richardson P."/>
            <person name="Wincker P."/>
            <person name="Weissenbach J."/>
            <person name="Ehrlich S.D."/>
            <person name="Sorokin A."/>
        </authorList>
    </citation>
    <scope>NUCLEOTIDE SEQUENCE [LARGE SCALE GENOMIC DNA]</scope>
    <source>
        <strain>KBAB4</strain>
    </source>
</reference>
<comment type="function">
    <text evidence="1">Could be a S-adenosyl-L-methionine-dependent methyltransferase.</text>
</comment>
<comment type="similarity">
    <text evidence="1">Belongs to the methyltransferase superfamily. YrrT family.</text>
</comment>
<gene>
    <name type="ordered locus">BcerKBAB4_4222</name>
</gene>